<proteinExistence type="inferred from homology"/>
<keyword id="KW-1185">Reference proteome</keyword>
<keyword id="KW-0732">Signal</keyword>
<organism>
    <name type="scientific">Mycobacterium tuberculosis (strain CDC 1551 / Oshkosh)</name>
    <dbReference type="NCBI Taxonomy" id="83331"/>
    <lineage>
        <taxon>Bacteria</taxon>
        <taxon>Bacillati</taxon>
        <taxon>Actinomycetota</taxon>
        <taxon>Actinomycetes</taxon>
        <taxon>Mycobacteriales</taxon>
        <taxon>Mycobacteriaceae</taxon>
        <taxon>Mycobacterium</taxon>
        <taxon>Mycobacterium tuberculosis complex</taxon>
    </lineage>
</organism>
<comment type="similarity">
    <text evidence="2">To M.tuberculosis Rv1403c.</text>
</comment>
<feature type="signal peptide" evidence="1">
    <location>
        <begin position="1"/>
        <end position="30"/>
    </location>
</feature>
<feature type="chain" id="PRO_0000427397" description="Uncharacterized protein MT1449">
    <location>
        <begin position="31"/>
        <end position="274"/>
    </location>
</feature>
<sequence>MTIDTPAREDQTLAATHRAMWALGDYALMAEEVMAPLGPILVAAAGIGPGVRVLDVAAGSGNISLPAAKTGATVISTDLTPELLQRSQARAAQQGLTLQYQEANAQALPFADDEFDTVISAIGVMFAPDHQAAADELVRVCRPGGTIGVISWTCEGFFGRMLATIRPYRPSVSADLPPSALWGREAYVTGLLGDGVTGLKTARGLLEVKRFDTAQAVHDYFKNNYGPTIEAYAHIGDNAVLAAELDRQLVELAAQYLSDGVMEWEYLLLTAEKR</sequence>
<gene>
    <name type="ordered locus">MT1449</name>
</gene>
<accession>P9WLY6</accession>
<accession>L0T9B0</accession>
<accession>P64841</accession>
<accession>P71673</accession>
<dbReference type="EMBL" id="AE000516">
    <property type="protein sequence ID" value="AAK45714.1"/>
    <property type="molecule type" value="Genomic_DNA"/>
</dbReference>
<dbReference type="PIR" id="B70901">
    <property type="entry name" value="B70901"/>
</dbReference>
<dbReference type="RefSeq" id="WP_003407297.1">
    <property type="nucleotide sequence ID" value="NZ_KK341227.1"/>
</dbReference>
<dbReference type="SMR" id="P9WLY6"/>
<dbReference type="KEGG" id="mtc:MT1449"/>
<dbReference type="PATRIC" id="fig|83331.31.peg.1557"/>
<dbReference type="HOGENOM" id="CLU_037990_2_1_11"/>
<dbReference type="Proteomes" id="UP000001020">
    <property type="component" value="Chromosome"/>
</dbReference>
<dbReference type="GO" id="GO:0008757">
    <property type="term" value="F:S-adenosylmethionine-dependent methyltransferase activity"/>
    <property type="evidence" value="ECO:0007669"/>
    <property type="project" value="InterPro"/>
</dbReference>
<dbReference type="CDD" id="cd02440">
    <property type="entry name" value="AdoMet_MTases"/>
    <property type="match status" value="1"/>
</dbReference>
<dbReference type="Gene3D" id="3.40.50.150">
    <property type="entry name" value="Vaccinia Virus protein VP39"/>
    <property type="match status" value="1"/>
</dbReference>
<dbReference type="InterPro" id="IPR013216">
    <property type="entry name" value="Methyltransf_11"/>
</dbReference>
<dbReference type="InterPro" id="IPR029063">
    <property type="entry name" value="SAM-dependent_MTases_sf"/>
</dbReference>
<dbReference type="PANTHER" id="PTHR43591:SF24">
    <property type="entry name" value="2-METHOXY-6-POLYPRENYL-1,4-BENZOQUINOL METHYLASE, MITOCHONDRIAL"/>
    <property type="match status" value="1"/>
</dbReference>
<dbReference type="PANTHER" id="PTHR43591">
    <property type="entry name" value="METHYLTRANSFERASE"/>
    <property type="match status" value="1"/>
</dbReference>
<dbReference type="Pfam" id="PF08241">
    <property type="entry name" value="Methyltransf_11"/>
    <property type="match status" value="1"/>
</dbReference>
<dbReference type="SUPFAM" id="SSF53335">
    <property type="entry name" value="S-adenosyl-L-methionine-dependent methyltransferases"/>
    <property type="match status" value="1"/>
</dbReference>
<protein>
    <recommendedName>
        <fullName>Uncharacterized protein MT1449</fullName>
    </recommendedName>
</protein>
<name>Y1405_MYCTO</name>
<reference key="1">
    <citation type="journal article" date="2002" name="J. Bacteriol.">
        <title>Whole-genome comparison of Mycobacterium tuberculosis clinical and laboratory strains.</title>
        <authorList>
            <person name="Fleischmann R.D."/>
            <person name="Alland D."/>
            <person name="Eisen J.A."/>
            <person name="Carpenter L."/>
            <person name="White O."/>
            <person name="Peterson J.D."/>
            <person name="DeBoy R.T."/>
            <person name="Dodson R.J."/>
            <person name="Gwinn M.L."/>
            <person name="Haft D.H."/>
            <person name="Hickey E.K."/>
            <person name="Kolonay J.F."/>
            <person name="Nelson W.C."/>
            <person name="Umayam L.A."/>
            <person name="Ermolaeva M.D."/>
            <person name="Salzberg S.L."/>
            <person name="Delcher A."/>
            <person name="Utterback T.R."/>
            <person name="Weidman J.F."/>
            <person name="Khouri H.M."/>
            <person name="Gill J."/>
            <person name="Mikula A."/>
            <person name="Bishai W."/>
            <person name="Jacobs W.R. Jr."/>
            <person name="Venter J.C."/>
            <person name="Fraser C.M."/>
        </authorList>
    </citation>
    <scope>NUCLEOTIDE SEQUENCE [LARGE SCALE GENOMIC DNA]</scope>
    <source>
        <strain>CDC 1551 / Oshkosh</strain>
    </source>
</reference>
<evidence type="ECO:0000255" key="1"/>
<evidence type="ECO:0000305" key="2"/>